<evidence type="ECO:0000255" key="1">
    <source>
        <dbReference type="HAMAP-Rule" id="MF_01382"/>
    </source>
</evidence>
<comment type="function">
    <text evidence="1">Part of the Sec protein translocase complex. Interacts with the SecYEG preprotein conducting channel. Has a central role in coupling the hydrolysis of ATP to the transfer of proteins into and across the cell membrane, serving as an ATP-driven molecular motor driving the stepwise translocation of polypeptide chains across the membrane.</text>
</comment>
<comment type="function">
    <text evidence="1">Probably participates in protein translocation into and across both the cytoplasmic and thylakoid membranes in cyanobacterial cells.</text>
</comment>
<comment type="catalytic activity">
    <reaction evidence="1">
        <text>ATP + H2O + cellular proteinSide 1 = ADP + phosphate + cellular proteinSide 2.</text>
        <dbReference type="EC" id="7.4.2.8"/>
    </reaction>
</comment>
<comment type="subunit">
    <text evidence="1">Monomer and homodimer. Part of the essential Sec protein translocation apparatus which comprises SecA, SecYEG and auxiliary proteins SecDF. Other proteins may also be involved.</text>
</comment>
<comment type="subcellular location">
    <subcellularLocation>
        <location evidence="1">Cell inner membrane</location>
        <topology evidence="1">Peripheral membrane protein</topology>
        <orientation evidence="1">Cytoplasmic side</orientation>
    </subcellularLocation>
    <subcellularLocation>
        <location evidence="1">Cellular thylakoid membrane</location>
        <topology evidence="1">Peripheral membrane protein</topology>
        <orientation evidence="1">Cytoplasmic side</orientation>
    </subcellularLocation>
    <subcellularLocation>
        <location evidence="1">Cytoplasm</location>
    </subcellularLocation>
</comment>
<comment type="similarity">
    <text evidence="1">Belongs to the SecA family.</text>
</comment>
<keyword id="KW-0067">ATP-binding</keyword>
<keyword id="KW-0997">Cell inner membrane</keyword>
<keyword id="KW-1003">Cell membrane</keyword>
<keyword id="KW-0963">Cytoplasm</keyword>
<keyword id="KW-0472">Membrane</keyword>
<keyword id="KW-0547">Nucleotide-binding</keyword>
<keyword id="KW-0653">Protein transport</keyword>
<keyword id="KW-0793">Thylakoid</keyword>
<keyword id="KW-1278">Translocase</keyword>
<keyword id="KW-0811">Translocation</keyword>
<keyword id="KW-0813">Transport</keyword>
<gene>
    <name evidence="1" type="primary">secA</name>
    <name type="ordered locus">syc1223_c</name>
</gene>
<proteinExistence type="inferred from homology"/>
<feature type="chain" id="PRO_0000318467" description="Protein translocase subunit SecA">
    <location>
        <begin position="1"/>
        <end position="948"/>
    </location>
</feature>
<feature type="binding site" evidence="1">
    <location>
        <position position="91"/>
    </location>
    <ligand>
        <name>ATP</name>
        <dbReference type="ChEBI" id="CHEBI:30616"/>
    </ligand>
</feature>
<feature type="binding site" evidence="1">
    <location>
        <begin position="109"/>
        <end position="113"/>
    </location>
    <ligand>
        <name>ATP</name>
        <dbReference type="ChEBI" id="CHEBI:30616"/>
    </ligand>
</feature>
<feature type="binding site" evidence="1">
    <location>
        <position position="509"/>
    </location>
    <ligand>
        <name>ATP</name>
        <dbReference type="ChEBI" id="CHEBI:30616"/>
    </ligand>
</feature>
<name>SECA_SYNP6</name>
<dbReference type="EC" id="7.4.2.8" evidence="1"/>
<dbReference type="EMBL" id="AP008231">
    <property type="protein sequence ID" value="BAD79413.1"/>
    <property type="molecule type" value="Genomic_DNA"/>
</dbReference>
<dbReference type="RefSeq" id="WP_011243535.1">
    <property type="nucleotide sequence ID" value="NZ_CP085785.1"/>
</dbReference>
<dbReference type="SMR" id="Q5N2Q7"/>
<dbReference type="TCDB" id="3.A.5.4.1">
    <property type="family name" value="the general secretory pathway (sec) family"/>
</dbReference>
<dbReference type="GeneID" id="72429104"/>
<dbReference type="KEGG" id="syc:syc1223_c"/>
<dbReference type="eggNOG" id="COG0653">
    <property type="taxonomic scope" value="Bacteria"/>
</dbReference>
<dbReference type="Proteomes" id="UP000001175">
    <property type="component" value="Chromosome"/>
</dbReference>
<dbReference type="GO" id="GO:0031522">
    <property type="term" value="C:cell envelope Sec protein transport complex"/>
    <property type="evidence" value="ECO:0007669"/>
    <property type="project" value="TreeGrafter"/>
</dbReference>
<dbReference type="GO" id="GO:0005829">
    <property type="term" value="C:cytosol"/>
    <property type="evidence" value="ECO:0007669"/>
    <property type="project" value="TreeGrafter"/>
</dbReference>
<dbReference type="GO" id="GO:0031676">
    <property type="term" value="C:plasma membrane-derived thylakoid membrane"/>
    <property type="evidence" value="ECO:0007669"/>
    <property type="project" value="UniProtKB-SubCell"/>
</dbReference>
<dbReference type="GO" id="GO:0005524">
    <property type="term" value="F:ATP binding"/>
    <property type="evidence" value="ECO:0007669"/>
    <property type="project" value="UniProtKB-UniRule"/>
</dbReference>
<dbReference type="GO" id="GO:0008564">
    <property type="term" value="F:protein-exporting ATPase activity"/>
    <property type="evidence" value="ECO:0007669"/>
    <property type="project" value="UniProtKB-EC"/>
</dbReference>
<dbReference type="GO" id="GO:0065002">
    <property type="term" value="P:intracellular protein transmembrane transport"/>
    <property type="evidence" value="ECO:0007669"/>
    <property type="project" value="UniProtKB-UniRule"/>
</dbReference>
<dbReference type="GO" id="GO:0017038">
    <property type="term" value="P:protein import"/>
    <property type="evidence" value="ECO:0007669"/>
    <property type="project" value="InterPro"/>
</dbReference>
<dbReference type="GO" id="GO:0006605">
    <property type="term" value="P:protein targeting"/>
    <property type="evidence" value="ECO:0007669"/>
    <property type="project" value="UniProtKB-UniRule"/>
</dbReference>
<dbReference type="GO" id="GO:0043952">
    <property type="term" value="P:protein transport by the Sec complex"/>
    <property type="evidence" value="ECO:0007669"/>
    <property type="project" value="TreeGrafter"/>
</dbReference>
<dbReference type="CDD" id="cd17928">
    <property type="entry name" value="DEXDc_SecA"/>
    <property type="match status" value="1"/>
</dbReference>
<dbReference type="CDD" id="cd18803">
    <property type="entry name" value="SF2_C_secA"/>
    <property type="match status" value="1"/>
</dbReference>
<dbReference type="FunFam" id="3.90.1440.10:FF:000003">
    <property type="entry name" value="Preprotein translocase SecA subunit"/>
    <property type="match status" value="1"/>
</dbReference>
<dbReference type="FunFam" id="3.40.50.300:FF:000429">
    <property type="entry name" value="Preprotein translocase subunit SecA"/>
    <property type="match status" value="1"/>
</dbReference>
<dbReference type="FunFam" id="1.10.3060.10:FF:000003">
    <property type="entry name" value="Protein translocase subunit SecA"/>
    <property type="match status" value="1"/>
</dbReference>
<dbReference type="FunFam" id="3.40.50.300:FF:000334">
    <property type="entry name" value="Protein translocase subunit SecA"/>
    <property type="match status" value="1"/>
</dbReference>
<dbReference type="Gene3D" id="1.10.3060.10">
    <property type="entry name" value="Helical scaffold and wing domains of SecA"/>
    <property type="match status" value="1"/>
</dbReference>
<dbReference type="Gene3D" id="3.40.50.300">
    <property type="entry name" value="P-loop containing nucleotide triphosphate hydrolases"/>
    <property type="match status" value="2"/>
</dbReference>
<dbReference type="Gene3D" id="3.90.1440.10">
    <property type="entry name" value="SecA, preprotein cross-linking domain"/>
    <property type="match status" value="1"/>
</dbReference>
<dbReference type="HAMAP" id="MF_01382">
    <property type="entry name" value="SecA"/>
    <property type="match status" value="1"/>
</dbReference>
<dbReference type="InterPro" id="IPR014001">
    <property type="entry name" value="Helicase_ATP-bd"/>
</dbReference>
<dbReference type="InterPro" id="IPR027417">
    <property type="entry name" value="P-loop_NTPase"/>
</dbReference>
<dbReference type="InterPro" id="IPR000185">
    <property type="entry name" value="SecA"/>
</dbReference>
<dbReference type="InterPro" id="IPR020937">
    <property type="entry name" value="SecA_CS"/>
</dbReference>
<dbReference type="InterPro" id="IPR011115">
    <property type="entry name" value="SecA_DEAD"/>
</dbReference>
<dbReference type="InterPro" id="IPR014018">
    <property type="entry name" value="SecA_motor_DEAD"/>
</dbReference>
<dbReference type="InterPro" id="IPR011130">
    <property type="entry name" value="SecA_preprotein_X-link_dom"/>
</dbReference>
<dbReference type="InterPro" id="IPR044722">
    <property type="entry name" value="SecA_SF2_C"/>
</dbReference>
<dbReference type="InterPro" id="IPR011116">
    <property type="entry name" value="SecA_Wing/Scaffold"/>
</dbReference>
<dbReference type="InterPro" id="IPR036266">
    <property type="entry name" value="SecA_Wing/Scaffold_sf"/>
</dbReference>
<dbReference type="InterPro" id="IPR036670">
    <property type="entry name" value="SecA_X-link_sf"/>
</dbReference>
<dbReference type="NCBIfam" id="TIGR00963">
    <property type="entry name" value="secA"/>
    <property type="match status" value="1"/>
</dbReference>
<dbReference type="PANTHER" id="PTHR30612:SF0">
    <property type="entry name" value="CHLOROPLAST PROTEIN-TRANSPORTING ATPASE"/>
    <property type="match status" value="1"/>
</dbReference>
<dbReference type="PANTHER" id="PTHR30612">
    <property type="entry name" value="SECA INNER MEMBRANE COMPONENT OF SEC PROTEIN SECRETION SYSTEM"/>
    <property type="match status" value="1"/>
</dbReference>
<dbReference type="Pfam" id="PF21090">
    <property type="entry name" value="P-loop_SecA"/>
    <property type="match status" value="1"/>
</dbReference>
<dbReference type="Pfam" id="PF07517">
    <property type="entry name" value="SecA_DEAD"/>
    <property type="match status" value="1"/>
</dbReference>
<dbReference type="Pfam" id="PF01043">
    <property type="entry name" value="SecA_PP_bind"/>
    <property type="match status" value="1"/>
</dbReference>
<dbReference type="Pfam" id="PF07516">
    <property type="entry name" value="SecA_SW"/>
    <property type="match status" value="1"/>
</dbReference>
<dbReference type="PRINTS" id="PR00906">
    <property type="entry name" value="SECA"/>
</dbReference>
<dbReference type="SMART" id="SM00957">
    <property type="entry name" value="SecA_DEAD"/>
    <property type="match status" value="1"/>
</dbReference>
<dbReference type="SMART" id="SM00958">
    <property type="entry name" value="SecA_PP_bind"/>
    <property type="match status" value="1"/>
</dbReference>
<dbReference type="SUPFAM" id="SSF81886">
    <property type="entry name" value="Helical scaffold and wing domains of SecA"/>
    <property type="match status" value="1"/>
</dbReference>
<dbReference type="SUPFAM" id="SSF52540">
    <property type="entry name" value="P-loop containing nucleoside triphosphate hydrolases"/>
    <property type="match status" value="2"/>
</dbReference>
<dbReference type="SUPFAM" id="SSF81767">
    <property type="entry name" value="Pre-protein crosslinking domain of SecA"/>
    <property type="match status" value="1"/>
</dbReference>
<dbReference type="PROSITE" id="PS01312">
    <property type="entry name" value="SECA"/>
    <property type="match status" value="1"/>
</dbReference>
<dbReference type="PROSITE" id="PS51196">
    <property type="entry name" value="SECA_MOTOR_DEAD"/>
    <property type="match status" value="1"/>
</dbReference>
<organism>
    <name type="scientific">Synechococcus sp. (strain ATCC 27144 / PCC 6301 / SAUG 1402/1)</name>
    <name type="common">Anacystis nidulans</name>
    <dbReference type="NCBI Taxonomy" id="269084"/>
    <lineage>
        <taxon>Bacteria</taxon>
        <taxon>Bacillati</taxon>
        <taxon>Cyanobacteriota</taxon>
        <taxon>Cyanophyceae</taxon>
        <taxon>Synechococcales</taxon>
        <taxon>Synechococcaceae</taxon>
        <taxon>Synechococcus</taxon>
    </lineage>
</organism>
<protein>
    <recommendedName>
        <fullName evidence="1">Protein translocase subunit SecA</fullName>
        <ecNumber evidence="1">7.4.2.8</ecNumber>
    </recommendedName>
</protein>
<accession>Q5N2Q7</accession>
<reference key="1">
    <citation type="journal article" date="2007" name="Photosyn. Res.">
        <title>Complete nucleotide sequence of the freshwater unicellular cyanobacterium Synechococcus elongatus PCC 6301 chromosome: gene content and organization.</title>
        <authorList>
            <person name="Sugita C."/>
            <person name="Ogata K."/>
            <person name="Shikata M."/>
            <person name="Jikuya H."/>
            <person name="Takano J."/>
            <person name="Furumichi M."/>
            <person name="Kanehisa M."/>
            <person name="Omata T."/>
            <person name="Sugiura M."/>
            <person name="Sugita M."/>
        </authorList>
    </citation>
    <scope>NUCLEOTIDE SEQUENCE [LARGE SCALE GENOMIC DNA]</scope>
    <source>
        <strain>ATCC 27144 / PCC 6301 / SAUG 1402/1</strain>
    </source>
</reference>
<sequence>MLNLLLGDPNVRKVKKYKPLVTEINLLEEDIEPLSDKDLIAKTAEFRQKLDKVSHSPAAEKELLAELLPEAFAVMREASKRVLGLRHFDVQMIGGMILHDGQIAEMKTGEGKTLVATLPSYLNALSGKGAHVVTVNDYLARRDAEWMGQVHRFLGLSVGLIQQGMSPEERRRNYNCDITYATNSELGFDYLRDNMAAVIEEVVQRPFNYAVIDEVDSILIDEARTPLIISGQVDRPSEKYMRASEVAALLQRSTNTDSEEEPDGDYEVDEKGRNVLLTDQGFINAEQLLGVSDLFDSNDPWAHYIFNAIKAKELFIKDVNYIVRGGEIVIVDEFTGRVMPGRRWSDGLHQAVESKEGVEIQPETQTLASITYQNFFLLYPKLSGMTGTAKTEELEFEKTYKLEVTVVPTNRVSRRRDQPDVVYKTEIGKWRAIAADCAELHAEGRPVLVGTTSVEKSEFLSQLLNEQGIPHNLLNAKPENVEREAEIVAQAGRRGAVTISTNMAGRGTDIILGGNADYMARLKLREYWMPQLVSFEEDGFGIAGVAGLEGGRPAAQGFGSPNGQKPRKTWKASSDIFPAELSTEAEKLLKAAVDLGVKTYGGNSLSELVAEDKIATAAEKAPTDDPVIQKLREAYQQVRKEYEAVTKQEQAEVVELGGLHVIGTERHESRRVDNQLRGRAGRQGDPGSTRFFLSLEDNLLRIFGGDRVAKLMNAFRVEEDMPIESGMLTRSLEGAQKKVETYYYDIRKQVFEYDEVMNNQRRAIYAERRRVLEGRELKEQVIQYGERTMDEIVDAHINVDLPSEEWDLEKLVNKVKQFVYLLEDLEAKQLEDLSPEAIKIFLHEQLRIAYDLKEAQIDQIQPGLMRQAERYFILQQIDTLWREHLQAMEALRESVGLRGYGQKDPLLEYKSEGYELFLEMMTAIRRNVIYSMFMFDPQPQARPQAEVV</sequence>